<reference key="1">
    <citation type="journal article" date="2001" name="Science">
        <title>Comparative genomics of Listeria species.</title>
        <authorList>
            <person name="Glaser P."/>
            <person name="Frangeul L."/>
            <person name="Buchrieser C."/>
            <person name="Rusniok C."/>
            <person name="Amend A."/>
            <person name="Baquero F."/>
            <person name="Berche P."/>
            <person name="Bloecker H."/>
            <person name="Brandt P."/>
            <person name="Chakraborty T."/>
            <person name="Charbit A."/>
            <person name="Chetouani F."/>
            <person name="Couve E."/>
            <person name="de Daruvar A."/>
            <person name="Dehoux P."/>
            <person name="Domann E."/>
            <person name="Dominguez-Bernal G."/>
            <person name="Duchaud E."/>
            <person name="Durant L."/>
            <person name="Dussurget O."/>
            <person name="Entian K.-D."/>
            <person name="Fsihi H."/>
            <person name="Garcia-del Portillo F."/>
            <person name="Garrido P."/>
            <person name="Gautier L."/>
            <person name="Goebel W."/>
            <person name="Gomez-Lopez N."/>
            <person name="Hain T."/>
            <person name="Hauf J."/>
            <person name="Jackson D."/>
            <person name="Jones L.-M."/>
            <person name="Kaerst U."/>
            <person name="Kreft J."/>
            <person name="Kuhn M."/>
            <person name="Kunst F."/>
            <person name="Kurapkat G."/>
            <person name="Madueno E."/>
            <person name="Maitournam A."/>
            <person name="Mata Vicente J."/>
            <person name="Ng E."/>
            <person name="Nedjari H."/>
            <person name="Nordsiek G."/>
            <person name="Novella S."/>
            <person name="de Pablos B."/>
            <person name="Perez-Diaz J.-C."/>
            <person name="Purcell R."/>
            <person name="Remmel B."/>
            <person name="Rose M."/>
            <person name="Schlueter T."/>
            <person name="Simoes N."/>
            <person name="Tierrez A."/>
            <person name="Vazquez-Boland J.-A."/>
            <person name="Voss H."/>
            <person name="Wehland J."/>
            <person name="Cossart P."/>
        </authorList>
    </citation>
    <scope>NUCLEOTIDE SEQUENCE [LARGE SCALE GENOMIC DNA]</scope>
    <source>
        <strain>ATCC BAA-680 / CLIP 11262</strain>
    </source>
</reference>
<comment type="function">
    <text evidence="1">ATP-dependent specificity component of the Clp protease. It directs the protease to specific substrates. Can perform chaperone functions in the absence of ClpP.</text>
</comment>
<comment type="subunit">
    <text evidence="1">Component of the ClpX-ClpP complex. Forms a hexameric ring that, in the presence of ATP, binds to fourteen ClpP subunits assembled into a disk-like structure with a central cavity, resembling the structure of eukaryotic proteasomes.</text>
</comment>
<comment type="similarity">
    <text evidence="1">Belongs to the ClpX chaperone family.</text>
</comment>
<feature type="chain" id="PRO_0000160378" description="ATP-dependent Clp protease ATP-binding subunit ClpX">
    <location>
        <begin position="1"/>
        <end position="419"/>
    </location>
</feature>
<feature type="domain" description="ClpX-type ZB" evidence="2">
    <location>
        <begin position="1"/>
        <end position="54"/>
    </location>
</feature>
<feature type="binding site" evidence="2">
    <location>
        <position position="13"/>
    </location>
    <ligand>
        <name>Zn(2+)</name>
        <dbReference type="ChEBI" id="CHEBI:29105"/>
    </ligand>
</feature>
<feature type="binding site" evidence="2">
    <location>
        <position position="16"/>
    </location>
    <ligand>
        <name>Zn(2+)</name>
        <dbReference type="ChEBI" id="CHEBI:29105"/>
    </ligand>
</feature>
<feature type="binding site" evidence="2">
    <location>
        <position position="35"/>
    </location>
    <ligand>
        <name>Zn(2+)</name>
        <dbReference type="ChEBI" id="CHEBI:29105"/>
    </ligand>
</feature>
<feature type="binding site" evidence="2">
    <location>
        <position position="38"/>
    </location>
    <ligand>
        <name>Zn(2+)</name>
        <dbReference type="ChEBI" id="CHEBI:29105"/>
    </ligand>
</feature>
<feature type="binding site" evidence="1">
    <location>
        <begin position="118"/>
        <end position="125"/>
    </location>
    <ligand>
        <name>ATP</name>
        <dbReference type="ChEBI" id="CHEBI:30616"/>
    </ligand>
</feature>
<accession>Q92C84</accession>
<protein>
    <recommendedName>
        <fullName evidence="1">ATP-dependent Clp protease ATP-binding subunit ClpX</fullName>
    </recommendedName>
</protein>
<name>CLPX_LISIN</name>
<dbReference type="EMBL" id="AL596168">
    <property type="protein sequence ID" value="CAC96538.1"/>
    <property type="molecule type" value="Genomic_DNA"/>
</dbReference>
<dbReference type="PIR" id="AB1596">
    <property type="entry name" value="AB1596"/>
</dbReference>
<dbReference type="RefSeq" id="WP_003766662.1">
    <property type="nucleotide sequence ID" value="NC_003212.1"/>
</dbReference>
<dbReference type="SMR" id="Q92C84"/>
<dbReference type="STRING" id="272626.gene:17565638"/>
<dbReference type="GeneID" id="93239142"/>
<dbReference type="KEGG" id="lin:clpX"/>
<dbReference type="eggNOG" id="COG1219">
    <property type="taxonomic scope" value="Bacteria"/>
</dbReference>
<dbReference type="HOGENOM" id="CLU_014218_8_2_9"/>
<dbReference type="OrthoDB" id="9804062at2"/>
<dbReference type="Proteomes" id="UP000002513">
    <property type="component" value="Chromosome"/>
</dbReference>
<dbReference type="GO" id="GO:0009376">
    <property type="term" value="C:HslUV protease complex"/>
    <property type="evidence" value="ECO:0007669"/>
    <property type="project" value="TreeGrafter"/>
</dbReference>
<dbReference type="GO" id="GO:0005524">
    <property type="term" value="F:ATP binding"/>
    <property type="evidence" value="ECO:0007669"/>
    <property type="project" value="UniProtKB-UniRule"/>
</dbReference>
<dbReference type="GO" id="GO:0016887">
    <property type="term" value="F:ATP hydrolysis activity"/>
    <property type="evidence" value="ECO:0007669"/>
    <property type="project" value="InterPro"/>
</dbReference>
<dbReference type="GO" id="GO:0140662">
    <property type="term" value="F:ATP-dependent protein folding chaperone"/>
    <property type="evidence" value="ECO:0007669"/>
    <property type="project" value="InterPro"/>
</dbReference>
<dbReference type="GO" id="GO:0046983">
    <property type="term" value="F:protein dimerization activity"/>
    <property type="evidence" value="ECO:0007669"/>
    <property type="project" value="InterPro"/>
</dbReference>
<dbReference type="GO" id="GO:0051082">
    <property type="term" value="F:unfolded protein binding"/>
    <property type="evidence" value="ECO:0007669"/>
    <property type="project" value="UniProtKB-UniRule"/>
</dbReference>
<dbReference type="GO" id="GO:0008270">
    <property type="term" value="F:zinc ion binding"/>
    <property type="evidence" value="ECO:0007669"/>
    <property type="project" value="InterPro"/>
</dbReference>
<dbReference type="GO" id="GO:0051301">
    <property type="term" value="P:cell division"/>
    <property type="evidence" value="ECO:0007669"/>
    <property type="project" value="TreeGrafter"/>
</dbReference>
<dbReference type="GO" id="GO:0051603">
    <property type="term" value="P:proteolysis involved in protein catabolic process"/>
    <property type="evidence" value="ECO:0007669"/>
    <property type="project" value="TreeGrafter"/>
</dbReference>
<dbReference type="CDD" id="cd19497">
    <property type="entry name" value="RecA-like_ClpX"/>
    <property type="match status" value="1"/>
</dbReference>
<dbReference type="FunFam" id="1.10.8.60:FF:000002">
    <property type="entry name" value="ATP-dependent Clp protease ATP-binding subunit ClpX"/>
    <property type="match status" value="1"/>
</dbReference>
<dbReference type="FunFam" id="3.40.50.300:FF:000005">
    <property type="entry name" value="ATP-dependent Clp protease ATP-binding subunit ClpX"/>
    <property type="match status" value="1"/>
</dbReference>
<dbReference type="Gene3D" id="1.10.8.60">
    <property type="match status" value="1"/>
</dbReference>
<dbReference type="Gene3D" id="6.20.220.10">
    <property type="entry name" value="ClpX chaperone, C4-type zinc finger domain"/>
    <property type="match status" value="1"/>
</dbReference>
<dbReference type="Gene3D" id="3.40.50.300">
    <property type="entry name" value="P-loop containing nucleotide triphosphate hydrolases"/>
    <property type="match status" value="1"/>
</dbReference>
<dbReference type="HAMAP" id="MF_00175">
    <property type="entry name" value="ClpX"/>
    <property type="match status" value="1"/>
</dbReference>
<dbReference type="InterPro" id="IPR003593">
    <property type="entry name" value="AAA+_ATPase"/>
</dbReference>
<dbReference type="InterPro" id="IPR050052">
    <property type="entry name" value="ATP-dep_Clp_protease_ClpX"/>
</dbReference>
<dbReference type="InterPro" id="IPR003959">
    <property type="entry name" value="ATPase_AAA_core"/>
</dbReference>
<dbReference type="InterPro" id="IPR019489">
    <property type="entry name" value="Clp_ATPase_C"/>
</dbReference>
<dbReference type="InterPro" id="IPR004487">
    <property type="entry name" value="Clp_protease_ATP-bd_su_ClpX"/>
</dbReference>
<dbReference type="InterPro" id="IPR046425">
    <property type="entry name" value="ClpX_bact"/>
</dbReference>
<dbReference type="InterPro" id="IPR027417">
    <property type="entry name" value="P-loop_NTPase"/>
</dbReference>
<dbReference type="InterPro" id="IPR010603">
    <property type="entry name" value="Znf_CppX_C4"/>
</dbReference>
<dbReference type="InterPro" id="IPR038366">
    <property type="entry name" value="Znf_CppX_C4_sf"/>
</dbReference>
<dbReference type="NCBIfam" id="TIGR00382">
    <property type="entry name" value="clpX"/>
    <property type="match status" value="1"/>
</dbReference>
<dbReference type="NCBIfam" id="NF003745">
    <property type="entry name" value="PRK05342.1"/>
    <property type="match status" value="1"/>
</dbReference>
<dbReference type="PANTHER" id="PTHR48102:SF7">
    <property type="entry name" value="ATP-DEPENDENT CLP PROTEASE ATP-BINDING SUBUNIT CLPX-LIKE, MITOCHONDRIAL"/>
    <property type="match status" value="1"/>
</dbReference>
<dbReference type="PANTHER" id="PTHR48102">
    <property type="entry name" value="ATP-DEPENDENT CLP PROTEASE ATP-BINDING SUBUNIT CLPX-LIKE, MITOCHONDRIAL-RELATED"/>
    <property type="match status" value="1"/>
</dbReference>
<dbReference type="Pfam" id="PF07724">
    <property type="entry name" value="AAA_2"/>
    <property type="match status" value="1"/>
</dbReference>
<dbReference type="Pfam" id="PF10431">
    <property type="entry name" value="ClpB_D2-small"/>
    <property type="match status" value="1"/>
</dbReference>
<dbReference type="Pfam" id="PF06689">
    <property type="entry name" value="zf-C4_ClpX"/>
    <property type="match status" value="1"/>
</dbReference>
<dbReference type="SMART" id="SM00382">
    <property type="entry name" value="AAA"/>
    <property type="match status" value="1"/>
</dbReference>
<dbReference type="SMART" id="SM01086">
    <property type="entry name" value="ClpB_D2-small"/>
    <property type="match status" value="1"/>
</dbReference>
<dbReference type="SMART" id="SM00994">
    <property type="entry name" value="zf-C4_ClpX"/>
    <property type="match status" value="1"/>
</dbReference>
<dbReference type="SUPFAM" id="SSF57716">
    <property type="entry name" value="Glucocorticoid receptor-like (DNA-binding domain)"/>
    <property type="match status" value="1"/>
</dbReference>
<dbReference type="SUPFAM" id="SSF52540">
    <property type="entry name" value="P-loop containing nucleoside triphosphate hydrolases"/>
    <property type="match status" value="1"/>
</dbReference>
<dbReference type="PROSITE" id="PS51902">
    <property type="entry name" value="CLPX_ZB"/>
    <property type="match status" value="1"/>
</dbReference>
<organism>
    <name type="scientific">Listeria innocua serovar 6a (strain ATCC BAA-680 / CLIP 11262)</name>
    <dbReference type="NCBI Taxonomy" id="272626"/>
    <lineage>
        <taxon>Bacteria</taxon>
        <taxon>Bacillati</taxon>
        <taxon>Bacillota</taxon>
        <taxon>Bacilli</taxon>
        <taxon>Bacillales</taxon>
        <taxon>Listeriaceae</taxon>
        <taxon>Listeria</taxon>
    </lineage>
</organism>
<keyword id="KW-0067">ATP-binding</keyword>
<keyword id="KW-0143">Chaperone</keyword>
<keyword id="KW-0479">Metal-binding</keyword>
<keyword id="KW-0547">Nucleotide-binding</keyword>
<keyword id="KW-0862">Zinc</keyword>
<sequence length="419" mass="46412">MFKFNDEKGQLKCSFCGKTQDQVRKLVAGPGVYICDECIELCNEIIEEELGISEFVDFGEVPKPQEIRHILSDYVIGQERAKKALAVAVYNHYKRINSNETKEDEVELSKSNICLIGPTGSGKTLLAQTLARILNVPFAIADATSLTEAGYVGEDVENILLKLIQSADYDVEKAEKGIIYIDEIDKVARKSENPSITRDVSGEGVQQALLKILEGTVASVPPQGGRKHPHQELIQIDTGNILFIVGGAFDGIEQIVKNRMGEKVIGFGTDNAKLKEDETYLSRVVPEDLLKFGLIPEFIGRLPVIATLEQLDEAALVSILTEPKNALVKQYKRMLELDDVELEFEPTALIEIAKEAIERKTGARGLRSIIEQIMLEVMFEIPSRDDITKCIITEKAARGEEEPQLQLEDGSIIPIKTSA</sequence>
<proteinExistence type="inferred from homology"/>
<evidence type="ECO:0000255" key="1">
    <source>
        <dbReference type="HAMAP-Rule" id="MF_00175"/>
    </source>
</evidence>
<evidence type="ECO:0000255" key="2">
    <source>
        <dbReference type="PROSITE-ProRule" id="PRU01250"/>
    </source>
</evidence>
<gene>
    <name evidence="1" type="primary">clpX</name>
    <name type="ordered locus">lin1307</name>
</gene>